<protein>
    <recommendedName>
        <fullName evidence="1">Alkanesulfonate monooxygenase</fullName>
        <ecNumber evidence="1">1.14.14.5</ecNumber>
    </recommendedName>
    <alternativeName>
        <fullName evidence="1">FMNH2-dependent aliphatic sulfonate monooxygenase</fullName>
    </alternativeName>
</protein>
<keyword id="KW-0285">Flavoprotein</keyword>
<keyword id="KW-0288">FMN</keyword>
<keyword id="KW-0503">Monooxygenase</keyword>
<keyword id="KW-0560">Oxidoreductase</keyword>
<gene>
    <name evidence="1" type="primary">ssuD</name>
    <name type="ordered locus">ECED1_0965</name>
</gene>
<evidence type="ECO:0000255" key="1">
    <source>
        <dbReference type="HAMAP-Rule" id="MF_01229"/>
    </source>
</evidence>
<reference key="1">
    <citation type="journal article" date="2009" name="PLoS Genet.">
        <title>Organised genome dynamics in the Escherichia coli species results in highly diverse adaptive paths.</title>
        <authorList>
            <person name="Touchon M."/>
            <person name="Hoede C."/>
            <person name="Tenaillon O."/>
            <person name="Barbe V."/>
            <person name="Baeriswyl S."/>
            <person name="Bidet P."/>
            <person name="Bingen E."/>
            <person name="Bonacorsi S."/>
            <person name="Bouchier C."/>
            <person name="Bouvet O."/>
            <person name="Calteau A."/>
            <person name="Chiapello H."/>
            <person name="Clermont O."/>
            <person name="Cruveiller S."/>
            <person name="Danchin A."/>
            <person name="Diard M."/>
            <person name="Dossat C."/>
            <person name="Karoui M.E."/>
            <person name="Frapy E."/>
            <person name="Garry L."/>
            <person name="Ghigo J.M."/>
            <person name="Gilles A.M."/>
            <person name="Johnson J."/>
            <person name="Le Bouguenec C."/>
            <person name="Lescat M."/>
            <person name="Mangenot S."/>
            <person name="Martinez-Jehanne V."/>
            <person name="Matic I."/>
            <person name="Nassif X."/>
            <person name="Oztas S."/>
            <person name="Petit M.A."/>
            <person name="Pichon C."/>
            <person name="Rouy Z."/>
            <person name="Ruf C.S."/>
            <person name="Schneider D."/>
            <person name="Tourret J."/>
            <person name="Vacherie B."/>
            <person name="Vallenet D."/>
            <person name="Medigue C."/>
            <person name="Rocha E.P.C."/>
            <person name="Denamur E."/>
        </authorList>
    </citation>
    <scope>NUCLEOTIDE SEQUENCE [LARGE SCALE GENOMIC DNA]</scope>
    <source>
        <strain>ED1a</strain>
    </source>
</reference>
<name>SSUD_ECO81</name>
<sequence>MSLNMFWFLPTHGDGHYLGTEEGSRPVDHGYLQQIAQAADRLGYTGVLIPTGRSCEDAWLVAASMIPVTQRLKFLVALRPSVTSPTVAARQAATLDRLSNGRALFNLVTGSDPQELAGDGVFLDHSERYEASAEFTQVWRRLLLGETVDFNGKHIHVRGAKLLFPPIQQPYPPLYFGGSSDVAQELAAEQVDLYLTWGEPPELVKEKIEQVRAKAAAHGRKIRFGVRLHVIVRETNDEAWQAAERLISHLDDETIAKAQAAFARTDSVGQQRMAALHNGKRDNLEISPNLWAGVGLVRGGAGTALVGDGPTVAARINEYAALGIDSFVLSGYPHLEEAYRVGELLFPHLDVAIPEIPQPQPLNPQGEAVANDFIPRNVAQS</sequence>
<proteinExistence type="inferred from homology"/>
<feature type="chain" id="PRO_1000164969" description="Alkanesulfonate monooxygenase">
    <location>
        <begin position="1"/>
        <end position="381"/>
    </location>
</feature>
<accession>B7MS53</accession>
<dbReference type="EC" id="1.14.14.5" evidence="1"/>
<dbReference type="EMBL" id="CU928162">
    <property type="protein sequence ID" value="CAR07167.1"/>
    <property type="molecule type" value="Genomic_DNA"/>
</dbReference>
<dbReference type="RefSeq" id="WP_000055985.1">
    <property type="nucleotide sequence ID" value="NC_011745.1"/>
</dbReference>
<dbReference type="SMR" id="B7MS53"/>
<dbReference type="KEGG" id="ecq:ECED1_0965"/>
<dbReference type="HOGENOM" id="CLU_027853_1_0_6"/>
<dbReference type="Proteomes" id="UP000000748">
    <property type="component" value="Chromosome"/>
</dbReference>
<dbReference type="GO" id="GO:0008726">
    <property type="term" value="F:alkanesulfonate monooxygenase activity"/>
    <property type="evidence" value="ECO:0007669"/>
    <property type="project" value="UniProtKB-UniRule"/>
</dbReference>
<dbReference type="GO" id="GO:0046306">
    <property type="term" value="P:alkanesulfonate catabolic process"/>
    <property type="evidence" value="ECO:0007669"/>
    <property type="project" value="TreeGrafter"/>
</dbReference>
<dbReference type="CDD" id="cd01094">
    <property type="entry name" value="Alkanesulfonate_monoxygenase"/>
    <property type="match status" value="1"/>
</dbReference>
<dbReference type="FunFam" id="3.20.20.30:FF:000001">
    <property type="entry name" value="Alkanesulfonate monooxygenase"/>
    <property type="match status" value="1"/>
</dbReference>
<dbReference type="Gene3D" id="3.20.20.30">
    <property type="entry name" value="Luciferase-like domain"/>
    <property type="match status" value="1"/>
</dbReference>
<dbReference type="HAMAP" id="MF_01229">
    <property type="entry name" value="Alkanesulf_monooxygen"/>
    <property type="match status" value="1"/>
</dbReference>
<dbReference type="InterPro" id="IPR019911">
    <property type="entry name" value="Alkanesulphonate_mOase_FMN-dep"/>
</dbReference>
<dbReference type="InterPro" id="IPR011251">
    <property type="entry name" value="Luciferase-like_dom"/>
</dbReference>
<dbReference type="InterPro" id="IPR036661">
    <property type="entry name" value="Luciferase-like_sf"/>
</dbReference>
<dbReference type="InterPro" id="IPR050172">
    <property type="entry name" value="SsuD_RutA_monooxygenase"/>
</dbReference>
<dbReference type="NCBIfam" id="TIGR03565">
    <property type="entry name" value="alk_sulf_monoox"/>
    <property type="match status" value="1"/>
</dbReference>
<dbReference type="NCBIfam" id="NF001939">
    <property type="entry name" value="PRK00719.1"/>
    <property type="match status" value="1"/>
</dbReference>
<dbReference type="PANTHER" id="PTHR42847">
    <property type="entry name" value="ALKANESULFONATE MONOOXYGENASE"/>
    <property type="match status" value="1"/>
</dbReference>
<dbReference type="PANTHER" id="PTHR42847:SF4">
    <property type="entry name" value="ALKANESULFONATE MONOOXYGENASE-RELATED"/>
    <property type="match status" value="1"/>
</dbReference>
<dbReference type="Pfam" id="PF00296">
    <property type="entry name" value="Bac_luciferase"/>
    <property type="match status" value="1"/>
</dbReference>
<dbReference type="SUPFAM" id="SSF51679">
    <property type="entry name" value="Bacterial luciferase-like"/>
    <property type="match status" value="1"/>
</dbReference>
<organism>
    <name type="scientific">Escherichia coli O81 (strain ED1a)</name>
    <dbReference type="NCBI Taxonomy" id="585397"/>
    <lineage>
        <taxon>Bacteria</taxon>
        <taxon>Pseudomonadati</taxon>
        <taxon>Pseudomonadota</taxon>
        <taxon>Gammaproteobacteria</taxon>
        <taxon>Enterobacterales</taxon>
        <taxon>Enterobacteriaceae</taxon>
        <taxon>Escherichia</taxon>
    </lineage>
</organism>
<comment type="function">
    <text evidence="1">Catalyzes the desulfonation of aliphatic sulfonates.</text>
</comment>
<comment type="catalytic activity">
    <reaction evidence="1">
        <text>an alkanesulfonate + FMNH2 + O2 = an aldehyde + FMN + sulfite + H2O + 2 H(+)</text>
        <dbReference type="Rhea" id="RHEA:23064"/>
        <dbReference type="ChEBI" id="CHEBI:15377"/>
        <dbReference type="ChEBI" id="CHEBI:15378"/>
        <dbReference type="ChEBI" id="CHEBI:15379"/>
        <dbReference type="ChEBI" id="CHEBI:17359"/>
        <dbReference type="ChEBI" id="CHEBI:17478"/>
        <dbReference type="ChEBI" id="CHEBI:57618"/>
        <dbReference type="ChEBI" id="CHEBI:58210"/>
        <dbReference type="ChEBI" id="CHEBI:134249"/>
        <dbReference type="EC" id="1.14.14.5"/>
    </reaction>
</comment>
<comment type="subunit">
    <text evidence="1">Homotetramer.</text>
</comment>
<comment type="miscellaneous">
    <text evidence="1">FMNH(2) which is absolutely required for this enzymatic reaction, is provided by SsuE.</text>
</comment>
<comment type="similarity">
    <text evidence="1">Belongs to the SsuD family.</text>
</comment>